<evidence type="ECO:0000255" key="1">
    <source>
        <dbReference type="HAMAP-Rule" id="MF_00658"/>
    </source>
</evidence>
<evidence type="ECO:0000305" key="2"/>
<protein>
    <recommendedName>
        <fullName evidence="1">Ribosomal RNA large subunit methyltransferase H</fullName>
        <ecNumber evidence="1">2.1.1.177</ecNumber>
    </recommendedName>
    <alternativeName>
        <fullName evidence="1">23S rRNA (pseudouridine1915-N3)-methyltransferase</fullName>
    </alternativeName>
    <alternativeName>
        <fullName evidence="1">23S rRNA m3Psi1915 methyltransferase</fullName>
    </alternativeName>
    <alternativeName>
        <fullName evidence="1">rRNA (pseudouridine-N3-)-methyltransferase RlmH</fullName>
    </alternativeName>
</protein>
<reference key="1">
    <citation type="journal article" date="2003" name="Proc. Natl. Acad. Sci. U.S.A.">
        <title>The genome sequence of Clostridium tetani, the causative agent of tetanus disease.</title>
        <authorList>
            <person name="Brueggemann H."/>
            <person name="Baeumer S."/>
            <person name="Fricke W.F."/>
            <person name="Wiezer A."/>
            <person name="Liesegang H."/>
            <person name="Decker I."/>
            <person name="Herzberg C."/>
            <person name="Martinez-Arias R."/>
            <person name="Merkl R."/>
            <person name="Henne A."/>
            <person name="Gottschalk G."/>
        </authorList>
    </citation>
    <scope>NUCLEOTIDE SEQUENCE [LARGE SCALE GENOMIC DNA]</scope>
    <source>
        <strain>Massachusetts / E88</strain>
    </source>
</reference>
<organism>
    <name type="scientific">Clostridium tetani (strain Massachusetts / E88)</name>
    <dbReference type="NCBI Taxonomy" id="212717"/>
    <lineage>
        <taxon>Bacteria</taxon>
        <taxon>Bacillati</taxon>
        <taxon>Bacillota</taxon>
        <taxon>Clostridia</taxon>
        <taxon>Eubacteriales</taxon>
        <taxon>Clostridiaceae</taxon>
        <taxon>Clostridium</taxon>
    </lineage>
</organism>
<name>RLMH_CLOTE</name>
<gene>
    <name evidence="1" type="primary">rlmH</name>
    <name type="ordered locus">CTC_00165</name>
</gene>
<feature type="chain" id="PRO_0000198110" description="Ribosomal RNA large subunit methyltransferase H">
    <location>
        <begin position="1"/>
        <end position="159"/>
    </location>
</feature>
<feature type="binding site" evidence="1">
    <location>
        <position position="76"/>
    </location>
    <ligand>
        <name>S-adenosyl-L-methionine</name>
        <dbReference type="ChEBI" id="CHEBI:59789"/>
    </ligand>
</feature>
<feature type="binding site" evidence="1">
    <location>
        <position position="108"/>
    </location>
    <ligand>
        <name>S-adenosyl-L-methionine</name>
        <dbReference type="ChEBI" id="CHEBI:59789"/>
    </ligand>
</feature>
<feature type="binding site" evidence="1">
    <location>
        <begin position="127"/>
        <end position="132"/>
    </location>
    <ligand>
        <name>S-adenosyl-L-methionine</name>
        <dbReference type="ChEBI" id="CHEBI:59789"/>
    </ligand>
</feature>
<proteinExistence type="inferred from homology"/>
<keyword id="KW-0963">Cytoplasm</keyword>
<keyword id="KW-0489">Methyltransferase</keyword>
<keyword id="KW-1185">Reference proteome</keyword>
<keyword id="KW-0698">rRNA processing</keyword>
<keyword id="KW-0949">S-adenosyl-L-methionine</keyword>
<keyword id="KW-0808">Transferase</keyword>
<dbReference type="EC" id="2.1.1.177" evidence="1"/>
<dbReference type="EMBL" id="AE015927">
    <property type="protein sequence ID" value="AAO34816.1"/>
    <property type="status" value="ALT_INIT"/>
    <property type="molecule type" value="Genomic_DNA"/>
</dbReference>
<dbReference type="RefSeq" id="WP_011098488.1">
    <property type="nucleotide sequence ID" value="NC_004557.1"/>
</dbReference>
<dbReference type="SMR" id="Q899K8"/>
<dbReference type="STRING" id="212717.CTC_00165"/>
<dbReference type="GeneID" id="24255052"/>
<dbReference type="KEGG" id="ctc:CTC_00165"/>
<dbReference type="HOGENOM" id="CLU_100552_0_0_9"/>
<dbReference type="OrthoDB" id="9806643at2"/>
<dbReference type="Proteomes" id="UP000001412">
    <property type="component" value="Chromosome"/>
</dbReference>
<dbReference type="GO" id="GO:0005737">
    <property type="term" value="C:cytoplasm"/>
    <property type="evidence" value="ECO:0007669"/>
    <property type="project" value="UniProtKB-SubCell"/>
</dbReference>
<dbReference type="GO" id="GO:0070038">
    <property type="term" value="F:rRNA (pseudouridine-N3-)-methyltransferase activity"/>
    <property type="evidence" value="ECO:0007669"/>
    <property type="project" value="UniProtKB-UniRule"/>
</dbReference>
<dbReference type="CDD" id="cd18081">
    <property type="entry name" value="RlmH-like"/>
    <property type="match status" value="1"/>
</dbReference>
<dbReference type="Gene3D" id="3.40.1280.10">
    <property type="match status" value="1"/>
</dbReference>
<dbReference type="HAMAP" id="MF_00658">
    <property type="entry name" value="23SrRNA_methyltr_H"/>
    <property type="match status" value="1"/>
</dbReference>
<dbReference type="InterPro" id="IPR029028">
    <property type="entry name" value="Alpha/beta_knot_MTases"/>
</dbReference>
<dbReference type="InterPro" id="IPR003742">
    <property type="entry name" value="RlmH-like"/>
</dbReference>
<dbReference type="InterPro" id="IPR029026">
    <property type="entry name" value="tRNA_m1G_MTases_N"/>
</dbReference>
<dbReference type="NCBIfam" id="NF000985">
    <property type="entry name" value="PRK00103.1-3"/>
    <property type="match status" value="1"/>
</dbReference>
<dbReference type="NCBIfam" id="TIGR00246">
    <property type="entry name" value="tRNA_RlmH_YbeA"/>
    <property type="match status" value="1"/>
</dbReference>
<dbReference type="PANTHER" id="PTHR33603">
    <property type="entry name" value="METHYLTRANSFERASE"/>
    <property type="match status" value="1"/>
</dbReference>
<dbReference type="PANTHER" id="PTHR33603:SF1">
    <property type="entry name" value="RIBOSOMAL RNA LARGE SUBUNIT METHYLTRANSFERASE H"/>
    <property type="match status" value="1"/>
</dbReference>
<dbReference type="Pfam" id="PF02590">
    <property type="entry name" value="SPOUT_MTase"/>
    <property type="match status" value="1"/>
</dbReference>
<dbReference type="PIRSF" id="PIRSF004505">
    <property type="entry name" value="MT_bac"/>
    <property type="match status" value="1"/>
</dbReference>
<dbReference type="SUPFAM" id="SSF75217">
    <property type="entry name" value="alpha/beta knot"/>
    <property type="match status" value="1"/>
</dbReference>
<sequence length="159" mass="18278">MNITIISVGKLKEKYLKLAVEEYSKRLSRYCKLNIIEVTDEKTPDNASEKEELQIKEKEGDLILKNIKDNMFVIALDLNGNELTSIDFSNFINDLGIKGESNLTFVIGGSLGLSSKVLSRSNYKLCFSKMTFPHQLFRVMLLEQIYRGYRIMNGEPYHK</sequence>
<accession>Q899K8</accession>
<comment type="function">
    <text evidence="1">Specifically methylates the pseudouridine at position 1915 (m3Psi1915) in 23S rRNA.</text>
</comment>
<comment type="catalytic activity">
    <reaction evidence="1">
        <text>pseudouridine(1915) in 23S rRNA + S-adenosyl-L-methionine = N(3)-methylpseudouridine(1915) in 23S rRNA + S-adenosyl-L-homocysteine + H(+)</text>
        <dbReference type="Rhea" id="RHEA:42752"/>
        <dbReference type="Rhea" id="RHEA-COMP:10221"/>
        <dbReference type="Rhea" id="RHEA-COMP:10222"/>
        <dbReference type="ChEBI" id="CHEBI:15378"/>
        <dbReference type="ChEBI" id="CHEBI:57856"/>
        <dbReference type="ChEBI" id="CHEBI:59789"/>
        <dbReference type="ChEBI" id="CHEBI:65314"/>
        <dbReference type="ChEBI" id="CHEBI:74486"/>
        <dbReference type="EC" id="2.1.1.177"/>
    </reaction>
</comment>
<comment type="subunit">
    <text evidence="1">Homodimer.</text>
</comment>
<comment type="subcellular location">
    <subcellularLocation>
        <location evidence="1">Cytoplasm</location>
    </subcellularLocation>
</comment>
<comment type="similarity">
    <text evidence="1">Belongs to the RNA methyltransferase RlmH family.</text>
</comment>
<comment type="sequence caution" evidence="2">
    <conflict type="erroneous initiation">
        <sequence resource="EMBL-CDS" id="AAO34816"/>
    </conflict>
</comment>